<comment type="function">
    <text evidence="1">Mediates the nuclear export of encapsidated genomic RNAs (ribonucleoproteins, RNPs). Acts as an adapter between viral RNPs complexes and the nuclear export machinery of the cell. Possesses no intrinsic RNA-binding activity, but includes a C-terminal M1-binding domain. This domain is believed to allow recognition of RNPs bound to the protein M1. Since protein M1 is not available in large quantities before late stages of infection, such an indirect recognition mechanism probably ensures that genomic RNPs are not exported from the host nucleus until sufficient quantities of viral mRNA and progeny genomic RNA have been synthesized. Furthermore, the RNPs enter the host cytoplasm only when associated with the M1 protein that is necessary to guide them to the plasma membrane. May down-regulate viral RNA synthesis when overproduced.</text>
</comment>
<comment type="subunit">
    <text evidence="1">Interacts with protein M1. May interact with host nucleoporin RAB/HRB and exportin XPO1/CRM1.</text>
</comment>
<comment type="subcellular location">
    <subcellularLocation>
        <location evidence="1">Virion</location>
    </subcellularLocation>
    <subcellularLocation>
        <location evidence="1">Host nucleus</location>
    </subcellularLocation>
</comment>
<comment type="alternative products">
    <event type="alternative splicing"/>
    <isoform>
        <id>P13144-1</id>
        <name>NEP</name>
        <name>NS2</name>
        <sequence type="displayed"/>
    </isoform>
    <isoform>
        <id>P69271-1</id>
        <name>NS1</name>
        <sequence type="external"/>
    </isoform>
</comment>
<comment type="miscellaneous">
    <text>Average number present in a viral particle is estimated to be 130-200 molecules.</text>
</comment>
<comment type="similarity">
    <text evidence="1">Belongs to the influenza viruses NEP family.</text>
</comment>
<organism>
    <name type="scientific">Influenza A virus (strain A/Mallard/Alberta/827/1978 H8N4)</name>
    <dbReference type="NCBI Taxonomy" id="11432"/>
    <lineage>
        <taxon>Viruses</taxon>
        <taxon>Riboviria</taxon>
        <taxon>Orthornavirae</taxon>
        <taxon>Negarnaviricota</taxon>
        <taxon>Polyploviricotina</taxon>
        <taxon>Insthoviricetes</taxon>
        <taxon>Articulavirales</taxon>
        <taxon>Orthomyxoviridae</taxon>
        <taxon>Alphainfluenzavirus</taxon>
        <taxon>Alphainfluenzavirus influenzae</taxon>
        <taxon>Influenza A virus</taxon>
    </lineage>
</organism>
<dbReference type="EMBL" id="M25372">
    <property type="protein sequence ID" value="AAA43528.1"/>
    <property type="molecule type" value="Genomic_RNA"/>
</dbReference>
<dbReference type="PIR" id="D32663">
    <property type="entry name" value="MNIVB6"/>
</dbReference>
<dbReference type="SMR" id="P13144"/>
<dbReference type="GO" id="GO:0042025">
    <property type="term" value="C:host cell nucleus"/>
    <property type="evidence" value="ECO:0007669"/>
    <property type="project" value="UniProtKB-SubCell"/>
</dbReference>
<dbReference type="GO" id="GO:0044423">
    <property type="term" value="C:virion component"/>
    <property type="evidence" value="ECO:0007669"/>
    <property type="project" value="UniProtKB-UniRule"/>
</dbReference>
<dbReference type="GO" id="GO:0039675">
    <property type="term" value="P:exit of virus from host cell nucleus through nuclear pore"/>
    <property type="evidence" value="ECO:0007669"/>
    <property type="project" value="UniProtKB-UniRule"/>
</dbReference>
<dbReference type="Gene3D" id="1.10.287.230">
    <property type="match status" value="1"/>
</dbReference>
<dbReference type="HAMAP" id="MF_04067">
    <property type="entry name" value="INFV_NEP"/>
    <property type="match status" value="1"/>
</dbReference>
<dbReference type="InterPro" id="IPR000968">
    <property type="entry name" value="Flu_NS2"/>
</dbReference>
<dbReference type="Pfam" id="PF00601">
    <property type="entry name" value="Flu_NS2"/>
    <property type="match status" value="1"/>
</dbReference>
<dbReference type="SUPFAM" id="SSF101156">
    <property type="entry name" value="Nonstructural protein ns2, Nep, M1-binding domain"/>
    <property type="match status" value="1"/>
</dbReference>
<protein>
    <recommendedName>
        <fullName evidence="1">Nuclear export protein</fullName>
        <shortName evidence="1">NEP</shortName>
    </recommendedName>
    <alternativeName>
        <fullName evidence="1">Non-structural protein 2</fullName>
        <shortName evidence="1">NS2</shortName>
    </alternativeName>
</protein>
<reference key="1">
    <citation type="journal article" date="1989" name="Virology">
        <title>The B allele of the NS gene of avian influenza viruses, but not the A allele, attenuates a human influenza A virus for squirrel monkeys.</title>
        <authorList>
            <person name="Treanor J.J."/>
            <person name="Snyder M.H."/>
            <person name="London W.T."/>
            <person name="Murphy B.R."/>
        </authorList>
    </citation>
    <scope>NUCLEOTIDE SEQUENCE [GENOMIC RNA]</scope>
</reference>
<sequence>MDSNTITSFQDILQRMSKMQLESSSVDLNGMITQFERLKIYRDSLGESVMRMGDLHSLQSRNATWREELSQKFEEIRWLIAECRNILTKTENSFERITFLQALQLLLEVESEIRTFSFQLI</sequence>
<gene>
    <name evidence="1" type="primary">NS</name>
</gene>
<name>NEP_I78A1</name>
<keyword id="KW-0025">Alternative splicing</keyword>
<keyword id="KW-1048">Host nucleus</keyword>
<keyword id="KW-0945">Host-virus interaction</keyword>
<keyword id="KW-0813">Transport</keyword>
<keyword id="KW-0946">Virion</keyword>
<accession>P13144</accession>
<feature type="chain" id="PRO_0000078997" description="Nuclear export protein">
    <location>
        <begin position="1"/>
        <end position="121"/>
    </location>
</feature>
<feature type="short sequence motif" description="Nuclear export signal" evidence="1">
    <location>
        <begin position="12"/>
        <end position="21"/>
    </location>
</feature>
<feature type="short sequence motif" description="Nuclear export signal" evidence="1">
    <location>
        <begin position="85"/>
        <end position="94"/>
    </location>
</feature>
<evidence type="ECO:0000255" key="1">
    <source>
        <dbReference type="HAMAP-Rule" id="MF_04067"/>
    </source>
</evidence>
<organismHost>
    <name type="scientific">Aves</name>
    <dbReference type="NCBI Taxonomy" id="8782"/>
</organismHost>
<proteinExistence type="inferred from homology"/>